<protein>
    <recommendedName>
        <fullName evidence="1">Protein translocase subunit SecA</fullName>
        <ecNumber evidence="1">7.4.2.8</ecNumber>
    </recommendedName>
</protein>
<organism>
    <name type="scientific">Protochlamydia amoebophila (strain UWE25)</name>
    <dbReference type="NCBI Taxonomy" id="264201"/>
    <lineage>
        <taxon>Bacteria</taxon>
        <taxon>Pseudomonadati</taxon>
        <taxon>Chlamydiota</taxon>
        <taxon>Chlamydiia</taxon>
        <taxon>Parachlamydiales</taxon>
        <taxon>Parachlamydiaceae</taxon>
        <taxon>Candidatus Protochlamydia</taxon>
    </lineage>
</organism>
<feature type="chain" id="PRO_0000320891" description="Protein translocase subunit SecA">
    <location>
        <begin position="1"/>
        <end position="1020"/>
    </location>
</feature>
<feature type="region of interest" description="Disordered" evidence="2">
    <location>
        <begin position="963"/>
        <end position="992"/>
    </location>
</feature>
<feature type="compositionally biased region" description="Basic and acidic residues" evidence="2">
    <location>
        <begin position="978"/>
        <end position="987"/>
    </location>
</feature>
<feature type="binding site" evidence="1">
    <location>
        <position position="99"/>
    </location>
    <ligand>
        <name>ATP</name>
        <dbReference type="ChEBI" id="CHEBI:30616"/>
    </ligand>
</feature>
<feature type="binding site" evidence="1">
    <location>
        <begin position="117"/>
        <end position="121"/>
    </location>
    <ligand>
        <name>ATP</name>
        <dbReference type="ChEBI" id="CHEBI:30616"/>
    </ligand>
</feature>
<feature type="binding site" evidence="1">
    <location>
        <position position="633"/>
    </location>
    <ligand>
        <name>ATP</name>
        <dbReference type="ChEBI" id="CHEBI:30616"/>
    </ligand>
</feature>
<feature type="binding site" evidence="1">
    <location>
        <position position="1002"/>
    </location>
    <ligand>
        <name>Zn(2+)</name>
        <dbReference type="ChEBI" id="CHEBI:29105"/>
    </ligand>
</feature>
<feature type="binding site" evidence="1">
    <location>
        <position position="1004"/>
    </location>
    <ligand>
        <name>Zn(2+)</name>
        <dbReference type="ChEBI" id="CHEBI:29105"/>
    </ligand>
</feature>
<feature type="binding site" evidence="1">
    <location>
        <position position="1013"/>
    </location>
    <ligand>
        <name>Zn(2+)</name>
        <dbReference type="ChEBI" id="CHEBI:29105"/>
    </ligand>
</feature>
<feature type="binding site" evidence="1">
    <location>
        <position position="1014"/>
    </location>
    <ligand>
        <name>Zn(2+)</name>
        <dbReference type="ChEBI" id="CHEBI:29105"/>
    </ligand>
</feature>
<comment type="function">
    <text evidence="1">Part of the Sec protein translocase complex. Interacts with the SecYEG preprotein conducting channel. Has a central role in coupling the hydrolysis of ATP to the transfer of proteins into and across the cell membrane, serving as an ATP-driven molecular motor driving the stepwise translocation of polypeptide chains across the membrane.</text>
</comment>
<comment type="catalytic activity">
    <reaction evidence="1">
        <text>ATP + H2O + cellular proteinSide 1 = ADP + phosphate + cellular proteinSide 2.</text>
        <dbReference type="EC" id="7.4.2.8"/>
    </reaction>
</comment>
<comment type="cofactor">
    <cofactor evidence="1">
        <name>Zn(2+)</name>
        <dbReference type="ChEBI" id="CHEBI:29105"/>
    </cofactor>
    <text evidence="1">May bind 1 zinc ion per subunit.</text>
</comment>
<comment type="subunit">
    <text evidence="1">Monomer and homodimer. Part of the essential Sec protein translocation apparatus which comprises SecA, SecYEG and auxiliary proteins SecDF. Other proteins may also be involved.</text>
</comment>
<comment type="subcellular location">
    <subcellularLocation>
        <location evidence="1">Cell inner membrane</location>
        <topology evidence="1">Peripheral membrane protein</topology>
        <orientation evidence="1">Cytoplasmic side</orientation>
    </subcellularLocation>
    <subcellularLocation>
        <location evidence="1">Cytoplasm</location>
    </subcellularLocation>
    <text evidence="1">Distribution is 50-50.</text>
</comment>
<comment type="similarity">
    <text evidence="1">Belongs to the SecA family.</text>
</comment>
<accession>Q6MEX9</accession>
<reference key="1">
    <citation type="journal article" date="2004" name="Science">
        <title>Illuminating the evolutionary history of chlamydiae.</title>
        <authorList>
            <person name="Horn M."/>
            <person name="Collingro A."/>
            <person name="Schmitz-Esser S."/>
            <person name="Beier C.L."/>
            <person name="Purkhold U."/>
            <person name="Fartmann B."/>
            <person name="Brandt P."/>
            <person name="Nyakatura G.J."/>
            <person name="Droege M."/>
            <person name="Frishman D."/>
            <person name="Rattei T."/>
            <person name="Mewes H.-W."/>
            <person name="Wagner M."/>
        </authorList>
    </citation>
    <scope>NUCLEOTIDE SEQUENCE [LARGE SCALE GENOMIC DNA]</scope>
    <source>
        <strain>UWE25</strain>
    </source>
</reference>
<dbReference type="EC" id="7.4.2.8" evidence="1"/>
<dbReference type="EMBL" id="BX908798">
    <property type="protein sequence ID" value="CAF22870.1"/>
    <property type="molecule type" value="Genomic_DNA"/>
</dbReference>
<dbReference type="RefSeq" id="WP_011174696.1">
    <property type="nucleotide sequence ID" value="NC_005861.2"/>
</dbReference>
<dbReference type="SMR" id="Q6MEX9"/>
<dbReference type="STRING" id="264201.pc0146"/>
<dbReference type="KEGG" id="pcu:PC_RS00720"/>
<dbReference type="eggNOG" id="COG0653">
    <property type="taxonomic scope" value="Bacteria"/>
</dbReference>
<dbReference type="HOGENOM" id="CLU_005314_3_0_0"/>
<dbReference type="OrthoDB" id="9805579at2"/>
<dbReference type="Proteomes" id="UP000000529">
    <property type="component" value="Chromosome"/>
</dbReference>
<dbReference type="GO" id="GO:0031522">
    <property type="term" value="C:cell envelope Sec protein transport complex"/>
    <property type="evidence" value="ECO:0007669"/>
    <property type="project" value="TreeGrafter"/>
</dbReference>
<dbReference type="GO" id="GO:0005829">
    <property type="term" value="C:cytosol"/>
    <property type="evidence" value="ECO:0007669"/>
    <property type="project" value="TreeGrafter"/>
</dbReference>
<dbReference type="GO" id="GO:0005886">
    <property type="term" value="C:plasma membrane"/>
    <property type="evidence" value="ECO:0007669"/>
    <property type="project" value="UniProtKB-SubCell"/>
</dbReference>
<dbReference type="GO" id="GO:0005524">
    <property type="term" value="F:ATP binding"/>
    <property type="evidence" value="ECO:0007669"/>
    <property type="project" value="UniProtKB-UniRule"/>
</dbReference>
<dbReference type="GO" id="GO:0046872">
    <property type="term" value="F:metal ion binding"/>
    <property type="evidence" value="ECO:0007669"/>
    <property type="project" value="UniProtKB-KW"/>
</dbReference>
<dbReference type="GO" id="GO:0008564">
    <property type="term" value="F:protein-exporting ATPase activity"/>
    <property type="evidence" value="ECO:0007669"/>
    <property type="project" value="UniProtKB-EC"/>
</dbReference>
<dbReference type="GO" id="GO:0065002">
    <property type="term" value="P:intracellular protein transmembrane transport"/>
    <property type="evidence" value="ECO:0007669"/>
    <property type="project" value="UniProtKB-UniRule"/>
</dbReference>
<dbReference type="GO" id="GO:0017038">
    <property type="term" value="P:protein import"/>
    <property type="evidence" value="ECO:0007669"/>
    <property type="project" value="InterPro"/>
</dbReference>
<dbReference type="GO" id="GO:0006605">
    <property type="term" value="P:protein targeting"/>
    <property type="evidence" value="ECO:0007669"/>
    <property type="project" value="UniProtKB-UniRule"/>
</dbReference>
<dbReference type="GO" id="GO:0043952">
    <property type="term" value="P:protein transport by the Sec complex"/>
    <property type="evidence" value="ECO:0007669"/>
    <property type="project" value="TreeGrafter"/>
</dbReference>
<dbReference type="CDD" id="cd17928">
    <property type="entry name" value="DEXDc_SecA"/>
    <property type="match status" value="1"/>
</dbReference>
<dbReference type="CDD" id="cd18803">
    <property type="entry name" value="SF2_C_secA"/>
    <property type="match status" value="1"/>
</dbReference>
<dbReference type="FunFam" id="3.40.50.300:FF:000246">
    <property type="entry name" value="Preprotein translocase subunit SecA"/>
    <property type="match status" value="1"/>
</dbReference>
<dbReference type="FunFam" id="3.40.50.300:FF:000429">
    <property type="entry name" value="Preprotein translocase subunit SecA"/>
    <property type="match status" value="1"/>
</dbReference>
<dbReference type="Gene3D" id="3.10.450.50">
    <property type="match status" value="1"/>
</dbReference>
<dbReference type="Gene3D" id="1.10.3060.10">
    <property type="entry name" value="Helical scaffold and wing domains of SecA"/>
    <property type="match status" value="1"/>
</dbReference>
<dbReference type="Gene3D" id="3.40.50.300">
    <property type="entry name" value="P-loop containing nucleotide triphosphate hydrolases"/>
    <property type="match status" value="3"/>
</dbReference>
<dbReference type="Gene3D" id="3.90.1440.10">
    <property type="entry name" value="SecA, preprotein cross-linking domain"/>
    <property type="match status" value="1"/>
</dbReference>
<dbReference type="HAMAP" id="MF_01382">
    <property type="entry name" value="SecA"/>
    <property type="match status" value="1"/>
</dbReference>
<dbReference type="InterPro" id="IPR014001">
    <property type="entry name" value="Helicase_ATP-bd"/>
</dbReference>
<dbReference type="InterPro" id="IPR001650">
    <property type="entry name" value="Helicase_C-like"/>
</dbReference>
<dbReference type="InterPro" id="IPR027417">
    <property type="entry name" value="P-loop_NTPase"/>
</dbReference>
<dbReference type="InterPro" id="IPR004027">
    <property type="entry name" value="SEC_C_motif"/>
</dbReference>
<dbReference type="InterPro" id="IPR000185">
    <property type="entry name" value="SecA"/>
</dbReference>
<dbReference type="InterPro" id="IPR020937">
    <property type="entry name" value="SecA_CS"/>
</dbReference>
<dbReference type="InterPro" id="IPR011115">
    <property type="entry name" value="SecA_DEAD"/>
</dbReference>
<dbReference type="InterPro" id="IPR014018">
    <property type="entry name" value="SecA_motor_DEAD"/>
</dbReference>
<dbReference type="InterPro" id="IPR011130">
    <property type="entry name" value="SecA_preprotein_X-link_dom"/>
</dbReference>
<dbReference type="InterPro" id="IPR044722">
    <property type="entry name" value="SecA_SF2_C"/>
</dbReference>
<dbReference type="InterPro" id="IPR011116">
    <property type="entry name" value="SecA_Wing/Scaffold"/>
</dbReference>
<dbReference type="InterPro" id="IPR036266">
    <property type="entry name" value="SecA_Wing/Scaffold_sf"/>
</dbReference>
<dbReference type="InterPro" id="IPR036670">
    <property type="entry name" value="SecA_X-link_sf"/>
</dbReference>
<dbReference type="NCBIfam" id="TIGR00963">
    <property type="entry name" value="secA"/>
    <property type="match status" value="1"/>
</dbReference>
<dbReference type="PANTHER" id="PTHR30612:SF0">
    <property type="entry name" value="CHLOROPLAST PROTEIN-TRANSPORTING ATPASE"/>
    <property type="match status" value="1"/>
</dbReference>
<dbReference type="PANTHER" id="PTHR30612">
    <property type="entry name" value="SECA INNER MEMBRANE COMPONENT OF SEC PROTEIN SECRETION SYSTEM"/>
    <property type="match status" value="1"/>
</dbReference>
<dbReference type="Pfam" id="PF21090">
    <property type="entry name" value="P-loop_SecA"/>
    <property type="match status" value="2"/>
</dbReference>
<dbReference type="Pfam" id="PF02810">
    <property type="entry name" value="SEC-C"/>
    <property type="match status" value="1"/>
</dbReference>
<dbReference type="Pfam" id="PF07517">
    <property type="entry name" value="SecA_DEAD"/>
    <property type="match status" value="1"/>
</dbReference>
<dbReference type="Pfam" id="PF01043">
    <property type="entry name" value="SecA_PP_bind"/>
    <property type="match status" value="1"/>
</dbReference>
<dbReference type="Pfam" id="PF07516">
    <property type="entry name" value="SecA_SW"/>
    <property type="match status" value="1"/>
</dbReference>
<dbReference type="PRINTS" id="PR00906">
    <property type="entry name" value="SECA"/>
</dbReference>
<dbReference type="SMART" id="SM00490">
    <property type="entry name" value="HELICc"/>
    <property type="match status" value="1"/>
</dbReference>
<dbReference type="SMART" id="SM00957">
    <property type="entry name" value="SecA_DEAD"/>
    <property type="match status" value="1"/>
</dbReference>
<dbReference type="SMART" id="SM00958">
    <property type="entry name" value="SecA_PP_bind"/>
    <property type="match status" value="1"/>
</dbReference>
<dbReference type="SUPFAM" id="SSF81886">
    <property type="entry name" value="Helical scaffold and wing domains of SecA"/>
    <property type="match status" value="1"/>
</dbReference>
<dbReference type="SUPFAM" id="SSF52540">
    <property type="entry name" value="P-loop containing nucleoside triphosphate hydrolases"/>
    <property type="match status" value="2"/>
</dbReference>
<dbReference type="SUPFAM" id="SSF81767">
    <property type="entry name" value="Pre-protein crosslinking domain of SecA"/>
    <property type="match status" value="1"/>
</dbReference>
<dbReference type="PROSITE" id="PS01312">
    <property type="entry name" value="SECA"/>
    <property type="match status" value="1"/>
</dbReference>
<dbReference type="PROSITE" id="PS51196">
    <property type="entry name" value="SECA_MOTOR_DEAD"/>
    <property type="match status" value="1"/>
</dbReference>
<evidence type="ECO:0000255" key="1">
    <source>
        <dbReference type="HAMAP-Rule" id="MF_01382"/>
    </source>
</evidence>
<evidence type="ECO:0000256" key="2">
    <source>
        <dbReference type="SAM" id="MobiDB-lite"/>
    </source>
</evidence>
<keyword id="KW-0067">ATP-binding</keyword>
<keyword id="KW-0997">Cell inner membrane</keyword>
<keyword id="KW-1003">Cell membrane</keyword>
<keyword id="KW-0963">Cytoplasm</keyword>
<keyword id="KW-0472">Membrane</keyword>
<keyword id="KW-0479">Metal-binding</keyword>
<keyword id="KW-0547">Nucleotide-binding</keyword>
<keyword id="KW-0653">Protein transport</keyword>
<keyword id="KW-1185">Reference proteome</keyword>
<keyword id="KW-1278">Translocase</keyword>
<keyword id="KW-0811">Translocation</keyword>
<keyword id="KW-0813">Transport</keyword>
<keyword id="KW-0862">Zinc</keyword>
<sequence length="1020" mass="117206">MFGFLKKIFGSAHDRLLNRYRKQVEEVNKWDQKFQSLSDEQLKAKTAEFRLRLKNGEMLDQLLPEAYAVVKAVCRRLNGTEIHVSGYNQRWDMVPYDVQVLGGIAMHNGAIAEMHTGEGKTLTAVMPLYLNALTGKPVHLITVNDYLAQRDCEWVGTVLRWLGLTTGALTNSVAIEKRKEIYESDVVYGTASEFGFDYLRDNSMAMSKEDQVQRGYYFAIIDEVDSILIDEARTPLIISGPVPDSRQMYDELKEGVAELVRRQRDLCNRLASDARKVVEEVEALGSGKKDKKLEESEQEAYRKLWLVGKGTPQNKILKRLKENPDIRAAIDKWDLYYHAEQNKEERTQTLAELYMIIDEKGNEYELTDKGINAWQTYTNGIGSPEDFIMMDIGDEYIKVDEDLSLDAESKMARKMQIKEEDAKRKERAHNLRQLLRAHLLMEKDVDYIIHDNKIVIIDENTGRPQPGRRFSDGLHQAIEAKEGVEIQKETQTYATITLQNFFRMYEKLSGMTGTATTEANEFKEIYKLDVLEIPTHRANRRVDFNDEIYMTEREKYNAILKEVREVHEKERPILIGTESVEVSEKLSRIFKQNGLEHTVLNAKQNEREAEIIAEAGKRAAITIATNMAGRGTDIKLEPGVADLGGLYVMGTTRHQSRRTDRQLRGRCARQGDPGNSKFYISFEDALLRLFASPRITSVLQKFRPPEGEPISAGMLNKSIETAQKRVEQRNYTMRKHTLEYDDVMNKQRQEIYAFRNEILGVGNIEPVAIEIIESVCSMGADQFFKSRSEEGGWNPEGYRQWLLHLFPVTFDEYFFDKEHLEIEEIEQMAADKVVEALKEKIASENAKVPGHLIAMGESPFPAHTAIRNLMIRKTDQMWQEHLLRMDHLRSDVTLRAVGQRDPLTEFKHEAFALFDELSRNLRTEVARSMFRFEIIAPQQTLEQLLQSGLRLETNRSLFVDLQNEQPSQEMAADEETQEESKIEENKPEPIVVGPRVGRNDLCPCGSGKKFKKCCNKVEIV</sequence>
<proteinExistence type="inferred from homology"/>
<gene>
    <name evidence="1" type="primary">secA</name>
    <name type="ordered locus">pc0146</name>
</gene>
<name>SECA_PARUW</name>